<accession>A1CRF7</accession>
<proteinExistence type="inferred from homology"/>
<reference key="1">
    <citation type="journal article" date="2008" name="PLoS Genet.">
        <title>Genomic islands in the pathogenic filamentous fungus Aspergillus fumigatus.</title>
        <authorList>
            <person name="Fedorova N.D."/>
            <person name="Khaldi N."/>
            <person name="Joardar V.S."/>
            <person name="Maiti R."/>
            <person name="Amedeo P."/>
            <person name="Anderson M.J."/>
            <person name="Crabtree J."/>
            <person name="Silva J.C."/>
            <person name="Badger J.H."/>
            <person name="Albarraq A."/>
            <person name="Angiuoli S."/>
            <person name="Bussey H."/>
            <person name="Bowyer P."/>
            <person name="Cotty P.J."/>
            <person name="Dyer P.S."/>
            <person name="Egan A."/>
            <person name="Galens K."/>
            <person name="Fraser-Liggett C.M."/>
            <person name="Haas B.J."/>
            <person name="Inman J.M."/>
            <person name="Kent R."/>
            <person name="Lemieux S."/>
            <person name="Malavazi I."/>
            <person name="Orvis J."/>
            <person name="Roemer T."/>
            <person name="Ronning C.M."/>
            <person name="Sundaram J.P."/>
            <person name="Sutton G."/>
            <person name="Turner G."/>
            <person name="Venter J.C."/>
            <person name="White O.R."/>
            <person name="Whitty B.R."/>
            <person name="Youngman P."/>
            <person name="Wolfe K.H."/>
            <person name="Goldman G.H."/>
            <person name="Wortman J.R."/>
            <person name="Jiang B."/>
            <person name="Denning D.W."/>
            <person name="Nierman W.C."/>
        </authorList>
    </citation>
    <scope>NUCLEOTIDE SEQUENCE [LARGE SCALE GENOMIC DNA]</scope>
    <source>
        <strain>ATCC 1007 / CBS 513.65 / DSM 816 / NCTC 3887 / NRRL 1 / QM 1276 / 107</strain>
    </source>
</reference>
<keyword id="KW-0539">Nucleus</keyword>
<keyword id="KW-1185">Reference proteome</keyword>
<keyword id="KW-0677">Repeat</keyword>
<keyword id="KW-0819">tRNA processing</keyword>
<keyword id="KW-0853">WD repeat</keyword>
<gene>
    <name type="primary">trm82</name>
    <name type="ORF">ACLA_029580</name>
</gene>
<organism>
    <name type="scientific">Aspergillus clavatus (strain ATCC 1007 / CBS 513.65 / DSM 816 / NCTC 3887 / NRRL 1 / QM 1276 / 107)</name>
    <dbReference type="NCBI Taxonomy" id="344612"/>
    <lineage>
        <taxon>Eukaryota</taxon>
        <taxon>Fungi</taxon>
        <taxon>Dikarya</taxon>
        <taxon>Ascomycota</taxon>
        <taxon>Pezizomycotina</taxon>
        <taxon>Eurotiomycetes</taxon>
        <taxon>Eurotiomycetidae</taxon>
        <taxon>Eurotiales</taxon>
        <taxon>Aspergillaceae</taxon>
        <taxon>Aspergillus</taxon>
        <taxon>Aspergillus subgen. Fumigati</taxon>
    </lineage>
</organism>
<name>TRM82_ASPCL</name>
<feature type="chain" id="PRO_0000370512" description="tRNA (guanine-N(7)-)-methyltransferase non-catalytic subunit trm82">
    <location>
        <begin position="1"/>
        <end position="495"/>
    </location>
</feature>
<feature type="repeat" description="WD 1">
    <location>
        <begin position="99"/>
        <end position="139"/>
    </location>
</feature>
<feature type="repeat" description="WD 2">
    <location>
        <begin position="245"/>
        <end position="290"/>
    </location>
</feature>
<feature type="repeat" description="WD 3">
    <location>
        <begin position="295"/>
        <end position="337"/>
    </location>
</feature>
<feature type="region of interest" description="Disordered" evidence="2">
    <location>
        <begin position="51"/>
        <end position="100"/>
    </location>
</feature>
<dbReference type="EMBL" id="DS027059">
    <property type="protein sequence ID" value="EAW08228.1"/>
    <property type="molecule type" value="Genomic_DNA"/>
</dbReference>
<dbReference type="RefSeq" id="XP_001269654.1">
    <property type="nucleotide sequence ID" value="XM_001269653.1"/>
</dbReference>
<dbReference type="SMR" id="A1CRF7"/>
<dbReference type="STRING" id="344612.A1CRF7"/>
<dbReference type="EnsemblFungi" id="EAW08228">
    <property type="protein sequence ID" value="EAW08228"/>
    <property type="gene ID" value="ACLA_029580"/>
</dbReference>
<dbReference type="GeneID" id="4701535"/>
<dbReference type="KEGG" id="act:ACLA_029580"/>
<dbReference type="VEuPathDB" id="FungiDB:ACLA_029580"/>
<dbReference type="eggNOG" id="KOG3914">
    <property type="taxonomic scope" value="Eukaryota"/>
</dbReference>
<dbReference type="HOGENOM" id="CLU_022082_0_0_1"/>
<dbReference type="OMA" id="SERCMPK"/>
<dbReference type="OrthoDB" id="339900at2759"/>
<dbReference type="UniPathway" id="UPA00989"/>
<dbReference type="Proteomes" id="UP000006701">
    <property type="component" value="Unassembled WGS sequence"/>
</dbReference>
<dbReference type="GO" id="GO:0005829">
    <property type="term" value="C:cytosol"/>
    <property type="evidence" value="ECO:0007669"/>
    <property type="project" value="TreeGrafter"/>
</dbReference>
<dbReference type="GO" id="GO:0005634">
    <property type="term" value="C:nucleus"/>
    <property type="evidence" value="ECO:0007669"/>
    <property type="project" value="UniProtKB-SubCell"/>
</dbReference>
<dbReference type="GO" id="GO:0043527">
    <property type="term" value="C:tRNA methyltransferase complex"/>
    <property type="evidence" value="ECO:0007669"/>
    <property type="project" value="TreeGrafter"/>
</dbReference>
<dbReference type="GO" id="GO:0106004">
    <property type="term" value="P:tRNA (guanine-N7)-methylation"/>
    <property type="evidence" value="ECO:0007669"/>
    <property type="project" value="UniProtKB-UniRule"/>
</dbReference>
<dbReference type="Gene3D" id="2.130.10.10">
    <property type="entry name" value="YVTN repeat-like/Quinoprotein amine dehydrogenase"/>
    <property type="match status" value="2"/>
</dbReference>
<dbReference type="HAMAP" id="MF_03056">
    <property type="entry name" value="TRM82"/>
    <property type="match status" value="1"/>
</dbReference>
<dbReference type="InterPro" id="IPR028884">
    <property type="entry name" value="Trm82"/>
</dbReference>
<dbReference type="InterPro" id="IPR015943">
    <property type="entry name" value="WD40/YVTN_repeat-like_dom_sf"/>
</dbReference>
<dbReference type="InterPro" id="IPR036322">
    <property type="entry name" value="WD40_repeat_dom_sf"/>
</dbReference>
<dbReference type="InterPro" id="IPR001680">
    <property type="entry name" value="WD40_rpt"/>
</dbReference>
<dbReference type="PANTHER" id="PTHR16288:SF0">
    <property type="entry name" value="TRNA (GUANINE-N(7)-)-METHYLTRANSFERASE NON-CATALYTIC SUBUNIT WDR4"/>
    <property type="match status" value="1"/>
</dbReference>
<dbReference type="PANTHER" id="PTHR16288">
    <property type="entry name" value="WD40 REPEAT PROTEIN 4"/>
    <property type="match status" value="1"/>
</dbReference>
<dbReference type="Pfam" id="PF00400">
    <property type="entry name" value="WD40"/>
    <property type="match status" value="1"/>
</dbReference>
<dbReference type="SMART" id="SM00320">
    <property type="entry name" value="WD40"/>
    <property type="match status" value="3"/>
</dbReference>
<dbReference type="SUPFAM" id="SSF50978">
    <property type="entry name" value="WD40 repeat-like"/>
    <property type="match status" value="1"/>
</dbReference>
<comment type="function">
    <text evidence="1">Required for the formation of N(7)-methylguanine at position 46 (m7G46) in tRNA. In the complex, it is required to stabilize and induce conformational changes of the catalytic subunit.</text>
</comment>
<comment type="pathway">
    <text evidence="1">tRNA modification; N(7)-methylguanine-tRNA biosynthesis.</text>
</comment>
<comment type="subunit">
    <text evidence="1">Forms a heterodimer with the catalytic subunit trm8.</text>
</comment>
<comment type="subcellular location">
    <subcellularLocation>
        <location evidence="1">Nucleus</location>
    </subcellularLocation>
</comment>
<comment type="similarity">
    <text evidence="1">Belongs to the WD repeat TRM82 family.</text>
</comment>
<evidence type="ECO:0000255" key="1">
    <source>
        <dbReference type="HAMAP-Rule" id="MF_03056"/>
    </source>
</evidence>
<evidence type="ECO:0000256" key="2">
    <source>
        <dbReference type="SAM" id="MobiDB-lite"/>
    </source>
</evidence>
<protein>
    <recommendedName>
        <fullName evidence="1">tRNA (guanine-N(7)-)-methyltransferase non-catalytic subunit trm82</fullName>
    </recommendedName>
    <alternativeName>
        <fullName evidence="1">Transfer RNA methyltransferase 82</fullName>
    </alternativeName>
</protein>
<sequence>MAATFQYPFQCIKSVERRNSGRQLIIGSAGPKIYTYAAETGERLGIWPETANTAEAKAAPSTTGEEPPEKRRKVSPPPDQKPEDSEPASQKSRKPEASPAWSTIPILAVSADGEYVVAVTAEDKCIRVFEVEENGALKQLSERQMPKRPSAIALADDDRTILCGDKFGDVYSLPLIDTGKGSVAPRAPAKVRPDQPAATTLTVHSKRNLASLEQQLRHYGQKDKNSAEEKPSSTFEHHLLLGHVSMLTDLICVSIPMDSSSEKKRSYILTADRDEHIRVSRGPSQAHIIENYCLGHTSFVNSLCIPQWAPEYLVSGGGDNYLLVWRWNEGRIVQKVPLVDETSDSEVAVRGIWVTDKMVLVAIDGSAKLLCFTLESDGTMKAQNSIQASGNVLDLTISSKDSAVLVSVDAVHVAGSTQEWRATPSSSSTLIEAFRLKSDTENVEWEPMSEAITSQVNSQGTSEISATLEEKQKKELNDALYSSGNLRKKNLGEDE</sequence>